<protein>
    <recommendedName>
        <fullName>Accessory gene regulator protein A</fullName>
    </recommendedName>
</protein>
<keyword id="KW-0010">Activator</keyword>
<keyword id="KW-0963">Cytoplasm</keyword>
<keyword id="KW-0238">DNA-binding</keyword>
<keyword id="KW-0597">Phosphoprotein</keyword>
<keyword id="KW-0804">Transcription</keyword>
<keyword id="KW-0805">Transcription regulation</keyword>
<keyword id="KW-0902">Two-component regulatory system</keyword>
<dbReference type="EMBL" id="BA000033">
    <property type="protein sequence ID" value="BAB95828.1"/>
    <property type="molecule type" value="Genomic_DNA"/>
</dbReference>
<dbReference type="RefSeq" id="WP_000688492.1">
    <property type="nucleotide sequence ID" value="NC_003923.1"/>
</dbReference>
<dbReference type="BMRB" id="P0A0I6"/>
<dbReference type="SMR" id="P0A0I6"/>
<dbReference type="KEGG" id="sam:MW1963"/>
<dbReference type="HOGENOM" id="CLU_000445_14_6_9"/>
<dbReference type="PRO" id="PR:P0A0I6"/>
<dbReference type="GO" id="GO:0005737">
    <property type="term" value="C:cytoplasm"/>
    <property type="evidence" value="ECO:0007669"/>
    <property type="project" value="UniProtKB-SubCell"/>
</dbReference>
<dbReference type="GO" id="GO:0003677">
    <property type="term" value="F:DNA binding"/>
    <property type="evidence" value="ECO:0007669"/>
    <property type="project" value="UniProtKB-KW"/>
</dbReference>
<dbReference type="GO" id="GO:0000156">
    <property type="term" value="F:phosphorelay response regulator activity"/>
    <property type="evidence" value="ECO:0007669"/>
    <property type="project" value="InterPro"/>
</dbReference>
<dbReference type="CDD" id="cd17533">
    <property type="entry name" value="REC_LytTR_AgrA-like"/>
    <property type="match status" value="1"/>
</dbReference>
<dbReference type="FunFam" id="2.40.50.1020:FF:000005">
    <property type="entry name" value="Accessory gene regulator A"/>
    <property type="match status" value="1"/>
</dbReference>
<dbReference type="Gene3D" id="3.40.50.2300">
    <property type="match status" value="1"/>
</dbReference>
<dbReference type="Gene3D" id="2.40.50.1020">
    <property type="entry name" value="LytTr DNA-binding domain"/>
    <property type="match status" value="1"/>
</dbReference>
<dbReference type="InterPro" id="IPR011006">
    <property type="entry name" value="CheY-like_superfamily"/>
</dbReference>
<dbReference type="InterPro" id="IPR046947">
    <property type="entry name" value="LytR-like"/>
</dbReference>
<dbReference type="InterPro" id="IPR007492">
    <property type="entry name" value="LytTR_DNA-bd_dom"/>
</dbReference>
<dbReference type="InterPro" id="IPR001789">
    <property type="entry name" value="Sig_transdc_resp-reg_receiver"/>
</dbReference>
<dbReference type="NCBIfam" id="NF046049">
    <property type="entry name" value="quorum_RR_AgrA"/>
    <property type="match status" value="1"/>
</dbReference>
<dbReference type="PANTHER" id="PTHR37299:SF3">
    <property type="entry name" value="STAGE 0 SPORULATION PROTEIN A HOMOLOG"/>
    <property type="match status" value="1"/>
</dbReference>
<dbReference type="PANTHER" id="PTHR37299">
    <property type="entry name" value="TRANSCRIPTIONAL REGULATOR-RELATED"/>
    <property type="match status" value="1"/>
</dbReference>
<dbReference type="Pfam" id="PF04397">
    <property type="entry name" value="LytTR"/>
    <property type="match status" value="1"/>
</dbReference>
<dbReference type="Pfam" id="PF00072">
    <property type="entry name" value="Response_reg"/>
    <property type="match status" value="1"/>
</dbReference>
<dbReference type="SMART" id="SM00850">
    <property type="entry name" value="LytTR"/>
    <property type="match status" value="1"/>
</dbReference>
<dbReference type="SMART" id="SM00448">
    <property type="entry name" value="REC"/>
    <property type="match status" value="1"/>
</dbReference>
<dbReference type="SUPFAM" id="SSF52172">
    <property type="entry name" value="CheY-like"/>
    <property type="match status" value="1"/>
</dbReference>
<dbReference type="PROSITE" id="PS50930">
    <property type="entry name" value="HTH_LYTTR"/>
    <property type="match status" value="1"/>
</dbReference>
<dbReference type="PROSITE" id="PS50110">
    <property type="entry name" value="RESPONSE_REGULATORY"/>
    <property type="match status" value="1"/>
</dbReference>
<reference key="1">
    <citation type="journal article" date="2002" name="Lancet">
        <title>Genome and virulence determinants of high virulence community-acquired MRSA.</title>
        <authorList>
            <person name="Baba T."/>
            <person name="Takeuchi F."/>
            <person name="Kuroda M."/>
            <person name="Yuzawa H."/>
            <person name="Aoki K."/>
            <person name="Oguchi A."/>
            <person name="Nagai Y."/>
            <person name="Iwama N."/>
            <person name="Asano K."/>
            <person name="Naimi T."/>
            <person name="Kuroda H."/>
            <person name="Cui L."/>
            <person name="Yamamoto K."/>
            <person name="Hiramatsu K."/>
        </authorList>
    </citation>
    <scope>NUCLEOTIDE SEQUENCE [LARGE SCALE GENOMIC DNA]</scope>
    <source>
        <strain>MW2</strain>
    </source>
</reference>
<name>AGRA_STAAW</name>
<feature type="chain" id="PRO_0000081001" description="Accessory gene regulator protein A">
    <location>
        <begin position="1"/>
        <end position="238"/>
    </location>
</feature>
<feature type="domain" description="Response regulatory" evidence="3">
    <location>
        <begin position="2"/>
        <end position="125"/>
    </location>
</feature>
<feature type="domain" description="HTH LytTR-type" evidence="2">
    <location>
        <begin position="143"/>
        <end position="238"/>
    </location>
</feature>
<feature type="modified residue" description="4-aspartylphosphate" evidence="3">
    <location>
        <position position="59"/>
    </location>
</feature>
<proteinExistence type="inferred from homology"/>
<evidence type="ECO:0000250" key="1"/>
<evidence type="ECO:0000255" key="2">
    <source>
        <dbReference type="PROSITE-ProRule" id="PRU00112"/>
    </source>
</evidence>
<evidence type="ECO:0000255" key="3">
    <source>
        <dbReference type="PROSITE-ProRule" id="PRU00169"/>
    </source>
</evidence>
<organism>
    <name type="scientific">Staphylococcus aureus (strain MW2)</name>
    <dbReference type="NCBI Taxonomy" id="196620"/>
    <lineage>
        <taxon>Bacteria</taxon>
        <taxon>Bacillati</taxon>
        <taxon>Bacillota</taxon>
        <taxon>Bacilli</taxon>
        <taxon>Bacillales</taxon>
        <taxon>Staphylococcaceae</taxon>
        <taxon>Staphylococcus</taxon>
    </lineage>
</organism>
<gene>
    <name type="primary">agrA</name>
    <name type="synonym">agr</name>
    <name type="ordered locus">MW1963</name>
</gene>
<sequence length="238" mass="27906">MKIFICEDDPKQRENMVTIIKNYIMIEEKPMEIALATDNPYEVLEQAKNMNDIGCYFLDIQLSTDINGIKLGSEIRKHDPVGNIIFVTSHSELTYLTFVYKVAAMDFIFKDDPAELRTRIIDCLETAHTRLQLLSKDNSVETIELKRGSNSVYVQYDDIMFFESSTKSHRLIAHLDNRQIEFYGNLKELSQLDDRFFRCHNSFVVNRHNIESIDSKERIVYFKNKEHCYASVRNVKKI</sequence>
<accession>P0A0I6</accession>
<accession>P13131</accession>
<comment type="function">
    <text evidence="1">Required for high-level post-exponential phase expression of a series of secreted proteins.</text>
</comment>
<comment type="subcellular location">
    <subcellularLocation>
        <location evidence="1">Cytoplasm</location>
    </subcellularLocation>
</comment>